<sequence>MKRISPLNTLFYLSLFFSYTFKGLKCTRIYKIGTKALPCSECHDVFDCTGCLFEEKESSHVIPLKLNKKNPNDHKKLQKHHESLKLGDVKYYVNRGEGISGSLGTSSGNTLDDMDLINEEINKKRTNAQLDEKNFLDFTTYNKNKAQDISDHLSDIQKHVYEQDAQKGNKNFTNNENNSDNENNSDNENNSDNENNLDNENNLDNENNSDNSSIEKNFIALENKNATVEQTKENIFLVPLKHLRDSQFVGELLVGTPPQTVYPIFDTGSTNVWVVTTACEEESCKKVRRYDPNKSKTFRRSFIEKNLHIVFGSGSISGSVGTDTFMLGKHLVRNQTFGLVESESNNNKNGGDNIFDYISFEGIVGLGFPGMLSAGNIPFFDNLLKQNPNVDPQFSFYISPYDGKSTLIIGGISKSFYEGDIYMLPVLKESYWEVKLDELYIGKERICCDEESYVIFDTGTSYNTMPSSQMKTFLNLIHSTACTEQNYKDILKSYPIIKYVFGELIIELHPEEYMILNDDVCMPAYMQIDVPSERNHAYLLGSLSFMRNFFTVFVRGTESRPSMVGVARAKSKN</sequence>
<organism evidence="13">
    <name type="scientific">Plasmodium falciparum (isolate NF54)</name>
    <dbReference type="NCBI Taxonomy" id="5843"/>
    <lineage>
        <taxon>Eukaryota</taxon>
        <taxon>Sar</taxon>
        <taxon>Alveolata</taxon>
        <taxon>Apicomplexa</taxon>
        <taxon>Aconoidasida</taxon>
        <taxon>Haemosporida</taxon>
        <taxon>Plasmodiidae</taxon>
        <taxon>Plasmodium</taxon>
        <taxon>Plasmodium (Laverania)</taxon>
    </lineage>
</organism>
<comment type="function">
    <text evidence="1 6 7">During the asexual blood stage, processes key proteins essential for merozoite egress and invasion of host erythrocytes (PubMed:29074774). Cleaves and activates proteases SUB1 and SUB2 (PubMed:29074774, PubMed:37036362). May process members of the EBL and Rh protein families (By similarity). Also cleaves apical membrane protein AMA1 (By similarity). During the mosquito vector stage and probably in ookinetes, cleaves CelTOS (By similarity).</text>
</comment>
<comment type="activity regulation">
    <text evidence="6 7">Inhibited by aminohydantoin compounds such as CWHM-117.</text>
</comment>
<comment type="subcellular location">
    <subcellularLocation>
        <location evidence="6">Cytoplasmic vesicle</location>
        <location evidence="6">Secretory vesicle</location>
    </subcellularLocation>
    <text evidence="6">In schizonts, localizes to exonemes which are secretory vesicles that discharge their content during egress into the parasitophorous vacuole.</text>
</comment>
<comment type="developmental stage">
    <text evidence="6">Expressed during the asexual blood stage, in schizonts (at protein level).</text>
</comment>
<comment type="PTM">
    <text evidence="1">Autocleaved into a p16 prodomain form and two mature forms p44 and p51.</text>
</comment>
<comment type="disruption phenotype">
    <text evidence="6 7">Normal asexual development in host erythrocytes; however, merozoite egress from erythrocyte is impaired (PubMed:29074774). Erythrocyte invasion by the few newly released merozoites is severely impaired (PubMed:29074774). Impaired SUB1 proteolytic processing (PubMed:29074774, PubMed:37036362).</text>
</comment>
<comment type="similarity">
    <text evidence="4">Belongs to the peptidase A1 family.</text>
</comment>
<reference evidence="13" key="1">
    <citation type="submission" date="2013-02" db="EMBL/GenBank/DDBJ databases">
        <title>The Genome Sequence of Plasmodium falciparum NF54.</title>
        <authorList>
            <consortium name="The Broad Institute Genome Sequencing Platform"/>
            <consortium name="The Broad Institute Genome Sequencing Center for Infectious Disease"/>
            <person name="Neafsey D."/>
            <person name="Cheeseman I."/>
            <person name="Volkman S."/>
            <person name="Adams J."/>
            <person name="Walker B."/>
            <person name="Young S.K."/>
            <person name="Zeng Q."/>
            <person name="Gargeya S."/>
            <person name="Fitzgerald M."/>
            <person name="Haas B."/>
            <person name="Abouelleil A."/>
            <person name="Alvarado L."/>
            <person name="Arachchi H.M."/>
            <person name="Berlin A.M."/>
            <person name="Chapman S.B."/>
            <person name="Dewar J."/>
            <person name="Goldberg J."/>
            <person name="Griggs A."/>
            <person name="Gujja S."/>
            <person name="Hansen M."/>
            <person name="Howarth C."/>
            <person name="Imamovic A."/>
            <person name="Larimer J."/>
            <person name="McCowan C."/>
            <person name="Murphy C."/>
            <person name="Neiman D."/>
            <person name="Pearson M."/>
            <person name="Priest M."/>
            <person name="Roberts A."/>
            <person name="Saif S."/>
            <person name="Shea T."/>
            <person name="Sisk P."/>
            <person name="Sykes S."/>
            <person name="Wortman J."/>
            <person name="Nusbaum C."/>
            <person name="Birren B."/>
        </authorList>
    </citation>
    <scope>NUCLEOTIDE SEQUENCE [LARGE SCALE GENOMIC DNA]</scope>
    <source>
        <strain evidence="13">NF54</strain>
    </source>
</reference>
<reference evidence="14" key="2">
    <citation type="submission" date="2017-11" db="EMBL/GenBank/DDBJ databases">
        <title>Plasmodium falciparum NF54 genome assembly.</title>
        <authorList>
            <person name="Bryant J.M."/>
            <person name="Baumgarten S."/>
            <person name="Scheidig-Benatar C."/>
            <person name="Scherf A."/>
        </authorList>
    </citation>
    <scope>NUCLEOTIDE SEQUENCE [LARGE SCALE GENOMIC DNA]</scope>
    <source>
        <strain evidence="14">NF54</strain>
    </source>
</reference>
<reference evidence="10" key="3">
    <citation type="journal article" date="2017" name="Science">
        <title>Plasmepsins IX and X are essential and druggable mediators of malaria parasite egress and invasion.</title>
        <authorList>
            <person name="Nasamu A.S."/>
            <person name="Glushakova S."/>
            <person name="Russo I."/>
            <person name="Vaupel B."/>
            <person name="Oksman A."/>
            <person name="Kim A.S."/>
            <person name="Fremont D.H."/>
            <person name="Tolia N."/>
            <person name="Beck J.R."/>
            <person name="Meyers M.J."/>
            <person name="Niles J.C."/>
            <person name="Zimmerberg J."/>
            <person name="Goldberg D.E."/>
        </authorList>
    </citation>
    <scope>FUNCTION</scope>
    <scope>CATALYTIC ACTIVITY</scope>
    <scope>ACTIVITY REGULATION</scope>
    <scope>SUBCELLULAR LOCATION</scope>
    <scope>DEVELOPMENTAL STAGE</scope>
    <scope>PROTEOLYTIC CLEAVAGE</scope>
    <scope>DISRUPTION PHENOTYPE</scope>
    <scope>MUTAGENESIS OF ASP-266</scope>
</reference>
<reference key="4">
    <citation type="journal article" date="2023" name="MBio">
        <title>Activation of the Plasmodium Egress Effector Subtilisin-Like Protease 1 Is Mediated by Plasmepsin X Destruction of the Prodomain.</title>
        <authorList>
            <person name="Mukherjee S."/>
            <person name="Nasamu A.S."/>
            <person name="Rubiano K.C."/>
            <person name="Goldberg D.E."/>
        </authorList>
    </citation>
    <scope>FUNCTION</scope>
    <scope>CATALYTIC ACTIVITY</scope>
    <scope>ACTIVITY REGULATION</scope>
    <scope>DISRUPTION PHENOTYPE</scope>
</reference>
<name>PLM10_PLAFO</name>
<keyword id="KW-0064">Aspartyl protease</keyword>
<keyword id="KW-0968">Cytoplasmic vesicle</keyword>
<keyword id="KW-1015">Disulfide bond</keyword>
<keyword id="KW-0325">Glycoprotein</keyword>
<keyword id="KW-0378">Hydrolase</keyword>
<keyword id="KW-0645">Protease</keyword>
<keyword id="KW-1185">Reference proteome</keyword>
<keyword id="KW-0732">Signal</keyword>
<keyword id="KW-0865">Zymogen</keyword>
<feature type="signal peptide" evidence="2">
    <location>
        <begin position="1"/>
        <end position="26"/>
    </location>
</feature>
<feature type="propeptide" id="PRO_0000456829" evidence="1">
    <location>
        <begin position="27"/>
        <end position="221"/>
    </location>
</feature>
<feature type="chain" id="PRO_0000454298" description="Plasmepsin X" evidence="2">
    <location>
        <begin position="222"/>
        <end position="573"/>
    </location>
</feature>
<feature type="domain" description="Peptidase A1" evidence="3">
    <location>
        <begin position="248"/>
        <end position="567"/>
    </location>
</feature>
<feature type="region of interest" description="Disordered" evidence="5">
    <location>
        <begin position="167"/>
        <end position="211"/>
    </location>
</feature>
<feature type="compositionally biased region" description="Acidic residues" evidence="5">
    <location>
        <begin position="183"/>
        <end position="203"/>
    </location>
</feature>
<feature type="active site" evidence="3">
    <location>
        <position position="266"/>
    </location>
</feature>
<feature type="active site" evidence="3">
    <location>
        <position position="457"/>
    </location>
</feature>
<feature type="site" description="Cleavage" evidence="1">
    <location>
        <begin position="131"/>
        <end position="132"/>
    </location>
</feature>
<feature type="site" description="Cleavage" evidence="1">
    <location>
        <begin position="220"/>
        <end position="221"/>
    </location>
</feature>
<feature type="glycosylation site" description="N-linked (GlcNAc...) asparagine" evidence="1">
    <location>
        <position position="334"/>
    </location>
</feature>
<feature type="disulfide bond" evidence="1">
    <location>
        <begin position="39"/>
        <end position="51"/>
    </location>
</feature>
<feature type="disulfide bond" evidence="1">
    <location>
        <begin position="42"/>
        <end position="48"/>
    </location>
</feature>
<feature type="disulfide bond" evidence="1">
    <location>
        <begin position="279"/>
        <end position="284"/>
    </location>
</feature>
<feature type="disulfide bond" evidence="1">
    <location>
        <begin position="447"/>
        <end position="448"/>
    </location>
</feature>
<feature type="disulfide bond" evidence="1">
    <location>
        <begin position="482"/>
        <end position="521"/>
    </location>
</feature>
<feature type="mutagenesis site" description="Reduces asexual blood stage growth. Loss of protease SUB1 proteolytic processing. Does not affect PMX processing into its mature form." evidence="6">
    <original>D</original>
    <variation>G</variation>
    <location>
        <position position="266"/>
    </location>
</feature>
<proteinExistence type="evidence at protein level"/>
<dbReference type="EC" id="3.4.23.-" evidence="6 7"/>
<dbReference type="EMBL" id="KE123790">
    <property type="protein sequence ID" value="EWC89121.1"/>
    <property type="molecule type" value="Genomic_DNA"/>
</dbReference>
<dbReference type="EMBL" id="NYMT01000006">
    <property type="protein sequence ID" value="PKC47425.1"/>
    <property type="molecule type" value="Genomic_DNA"/>
</dbReference>
<dbReference type="SMR" id="W7JWW5"/>
<dbReference type="DrugBank" id="DB17096">
    <property type="generic name" value="UCB7362"/>
</dbReference>
<dbReference type="GlyCosmos" id="W7JWW5">
    <property type="glycosylation" value="1 site, No reported glycans"/>
</dbReference>
<dbReference type="EnsemblProtists" id="EWC89121">
    <property type="protein sequence ID" value="EWC89121"/>
    <property type="gene ID" value="PFNF54_02086"/>
</dbReference>
<dbReference type="VEuPathDB" id="PlasmoDB:PfNF54_080012200"/>
<dbReference type="OMA" id="ECSACLF"/>
<dbReference type="Proteomes" id="UP000030673">
    <property type="component" value="Unassembled WGS sequence"/>
</dbReference>
<dbReference type="Proteomes" id="UP000232684">
    <property type="component" value="Unassembled WGS sequence"/>
</dbReference>
<dbReference type="GO" id="GO:0044311">
    <property type="term" value="C:exoneme"/>
    <property type="evidence" value="ECO:0000314"/>
    <property type="project" value="UniProtKB"/>
</dbReference>
<dbReference type="GO" id="GO:0030133">
    <property type="term" value="C:transport vesicle"/>
    <property type="evidence" value="ECO:0007669"/>
    <property type="project" value="UniProtKB-SubCell"/>
</dbReference>
<dbReference type="GO" id="GO:0004190">
    <property type="term" value="F:aspartic-type endopeptidase activity"/>
    <property type="evidence" value="ECO:0000315"/>
    <property type="project" value="UniProtKB"/>
</dbReference>
<dbReference type="GO" id="GO:0085017">
    <property type="term" value="P:entry into host cell by a symbiont-containing vacuole"/>
    <property type="evidence" value="ECO:0000315"/>
    <property type="project" value="UniProtKB"/>
</dbReference>
<dbReference type="GO" id="GO:0035891">
    <property type="term" value="P:exit from host cell"/>
    <property type="evidence" value="ECO:0000315"/>
    <property type="project" value="UniProtKB"/>
</dbReference>
<dbReference type="GO" id="GO:0016485">
    <property type="term" value="P:protein processing"/>
    <property type="evidence" value="ECO:0000315"/>
    <property type="project" value="UniProtKB"/>
</dbReference>
<dbReference type="CDD" id="cd05471">
    <property type="entry name" value="pepsin_like"/>
    <property type="match status" value="1"/>
</dbReference>
<dbReference type="FunFam" id="2.40.70.10:FF:000082">
    <property type="entry name" value="Plasmepsin X"/>
    <property type="match status" value="1"/>
</dbReference>
<dbReference type="Gene3D" id="2.40.70.10">
    <property type="entry name" value="Acid Proteases"/>
    <property type="match status" value="2"/>
</dbReference>
<dbReference type="InterPro" id="IPR001461">
    <property type="entry name" value="Aspartic_peptidase_A1"/>
</dbReference>
<dbReference type="InterPro" id="IPR001969">
    <property type="entry name" value="Aspartic_peptidase_AS"/>
</dbReference>
<dbReference type="InterPro" id="IPR034164">
    <property type="entry name" value="Pepsin-like_dom"/>
</dbReference>
<dbReference type="InterPro" id="IPR033121">
    <property type="entry name" value="PEPTIDASE_A1"/>
</dbReference>
<dbReference type="InterPro" id="IPR021109">
    <property type="entry name" value="Peptidase_aspartic_dom_sf"/>
</dbReference>
<dbReference type="PANTHER" id="PTHR47966">
    <property type="entry name" value="BETA-SITE APP-CLEAVING ENZYME, ISOFORM A-RELATED"/>
    <property type="match status" value="1"/>
</dbReference>
<dbReference type="PANTHER" id="PTHR47966:SF51">
    <property type="entry name" value="BETA-SITE APP-CLEAVING ENZYME, ISOFORM A-RELATED"/>
    <property type="match status" value="1"/>
</dbReference>
<dbReference type="Pfam" id="PF00026">
    <property type="entry name" value="Asp"/>
    <property type="match status" value="1"/>
</dbReference>
<dbReference type="PRINTS" id="PR00792">
    <property type="entry name" value="PEPSIN"/>
</dbReference>
<dbReference type="SUPFAM" id="SSF50630">
    <property type="entry name" value="Acid proteases"/>
    <property type="match status" value="1"/>
</dbReference>
<dbReference type="PROSITE" id="PS00141">
    <property type="entry name" value="ASP_PROTEASE"/>
    <property type="match status" value="1"/>
</dbReference>
<dbReference type="PROSITE" id="PS51767">
    <property type="entry name" value="PEPTIDASE_A1"/>
    <property type="match status" value="1"/>
</dbReference>
<accession>W7JWW5</accession>
<gene>
    <name evidence="8" type="primary">PMX</name>
    <name evidence="12" type="ORF">CK202_2307</name>
    <name evidence="11" type="ORF">PFNF54_02086</name>
</gene>
<evidence type="ECO:0000250" key="1">
    <source>
        <dbReference type="UniProtKB" id="Q8IAS0"/>
    </source>
</evidence>
<evidence type="ECO:0000255" key="2"/>
<evidence type="ECO:0000255" key="3">
    <source>
        <dbReference type="PROSITE-ProRule" id="PRU01103"/>
    </source>
</evidence>
<evidence type="ECO:0000255" key="4">
    <source>
        <dbReference type="RuleBase" id="RU000454"/>
    </source>
</evidence>
<evidence type="ECO:0000256" key="5">
    <source>
        <dbReference type="SAM" id="MobiDB-lite"/>
    </source>
</evidence>
<evidence type="ECO:0000269" key="6">
    <source>
    </source>
</evidence>
<evidence type="ECO:0000269" key="7">
    <source>
    </source>
</evidence>
<evidence type="ECO:0000303" key="8">
    <source>
    </source>
</evidence>
<evidence type="ECO:0000303" key="9">
    <source>
    </source>
</evidence>
<evidence type="ECO:0000305" key="10"/>
<evidence type="ECO:0000312" key="11">
    <source>
        <dbReference type="EMBL" id="EWC89121.1"/>
    </source>
</evidence>
<evidence type="ECO:0000312" key="12">
    <source>
        <dbReference type="EMBL" id="PKC47425.1"/>
    </source>
</evidence>
<evidence type="ECO:0000312" key="13">
    <source>
        <dbReference type="Proteomes" id="UP000030673"/>
    </source>
</evidence>
<evidence type="ECO:0000312" key="14">
    <source>
        <dbReference type="Proteomes" id="UP000232684"/>
    </source>
</evidence>
<protein>
    <recommendedName>
        <fullName evidence="8 9">Plasmepsin X</fullName>
        <shortName evidence="9">PM X</shortName>
        <ecNumber evidence="6 7">3.4.23.-</ecNumber>
    </recommendedName>
    <alternativeName>
        <fullName evidence="10">Plasmepsin 10</fullName>
    </alternativeName>
</protein>